<name>MYB77_ARATH</name>
<organism>
    <name type="scientific">Arabidopsis thaliana</name>
    <name type="common">Mouse-ear cress</name>
    <dbReference type="NCBI Taxonomy" id="3702"/>
    <lineage>
        <taxon>Eukaryota</taxon>
        <taxon>Viridiplantae</taxon>
        <taxon>Streptophyta</taxon>
        <taxon>Embryophyta</taxon>
        <taxon>Tracheophyta</taxon>
        <taxon>Spermatophyta</taxon>
        <taxon>Magnoliopsida</taxon>
        <taxon>eudicotyledons</taxon>
        <taxon>Gunneridae</taxon>
        <taxon>Pentapetalae</taxon>
        <taxon>rosids</taxon>
        <taxon>malvids</taxon>
        <taxon>Brassicales</taxon>
        <taxon>Brassicaceae</taxon>
        <taxon>Camelineae</taxon>
        <taxon>Arabidopsis</taxon>
    </lineage>
</organism>
<protein>
    <recommendedName>
        <fullName evidence="7">Transcription factor MYB77</fullName>
    </recommendedName>
    <alternativeName>
        <fullName evidence="7">Myb-related protein 77</fullName>
        <shortName evidence="7">AtMYB77</shortName>
    </alternativeName>
    <alternativeName>
        <fullName evidence="8">Myb-related protein R2</fullName>
        <shortName evidence="8">AtMYBR2</shortName>
    </alternativeName>
</protein>
<gene>
    <name evidence="7" type="primary">MYB77</name>
    <name evidence="8" type="synonym">MYBR2</name>
    <name evidence="9" type="ordered locus">At3g50060</name>
    <name evidence="10" type="ORF">F3A4.140</name>
</gene>
<proteinExistence type="evidence at protein level"/>
<sequence>MADRVKGPWSQEEDEQLRRMVEKYGPRNWSAISKSIPGRSGKSCRLRWCNQLSPEVEHRPFSPEEDETIVTARAQFGNKWATIARLLNGRTDNAVKNHWNSTLKRKCSGGVAVTTVTETEEDQDRPKKRRSVSFDSAFAPVDTGLYMSPESPNGIDVSDSSTIPSPSSPVAQLFKPMPISGGFTVVPQPLPVEMSSSSEDPPTSLSLSLPGAENTSSSHNNNNNALMFPRFESQMKINVEERGEGRRGEFMTVVQEMIKAEVRSYMAEMQKTSGGFVVGGLYESGGNGGFRDCGVITPKVE</sequence>
<dbReference type="EMBL" id="AY519598">
    <property type="protein sequence ID" value="AAS10068.1"/>
    <property type="molecule type" value="mRNA"/>
</dbReference>
<dbReference type="EMBL" id="AL132978">
    <property type="protein sequence ID" value="CAB62114.1"/>
    <property type="molecule type" value="Genomic_DNA"/>
</dbReference>
<dbReference type="EMBL" id="CP002686">
    <property type="protein sequence ID" value="AEE78622.1"/>
    <property type="molecule type" value="Genomic_DNA"/>
</dbReference>
<dbReference type="EMBL" id="AF424588">
    <property type="protein sequence ID" value="AAL11582.1"/>
    <property type="molecule type" value="mRNA"/>
</dbReference>
<dbReference type="EMBL" id="AY124828">
    <property type="protein sequence ID" value="AAM70537.1"/>
    <property type="molecule type" value="mRNA"/>
</dbReference>
<dbReference type="PIR" id="T45859">
    <property type="entry name" value="T45859"/>
</dbReference>
<dbReference type="RefSeq" id="NP_190575.1">
    <property type="nucleotide sequence ID" value="NM_114866.4"/>
</dbReference>
<dbReference type="SMR" id="Q9SN12"/>
<dbReference type="FunCoup" id="Q9SN12">
    <property type="interactions" value="6"/>
</dbReference>
<dbReference type="IntAct" id="Q9SN12">
    <property type="interactions" value="21"/>
</dbReference>
<dbReference type="STRING" id="3702.Q9SN12"/>
<dbReference type="PaxDb" id="3702-AT3G50060.1"/>
<dbReference type="ProteomicsDB" id="251029"/>
<dbReference type="EnsemblPlants" id="AT3G50060.1">
    <property type="protein sequence ID" value="AT3G50060.1"/>
    <property type="gene ID" value="AT3G50060"/>
</dbReference>
<dbReference type="GeneID" id="824168"/>
<dbReference type="Gramene" id="AT3G50060.1">
    <property type="protein sequence ID" value="AT3G50060.1"/>
    <property type="gene ID" value="AT3G50060"/>
</dbReference>
<dbReference type="KEGG" id="ath:AT3G50060"/>
<dbReference type="Araport" id="AT3G50060"/>
<dbReference type="TAIR" id="AT3G50060">
    <property type="gene designation" value="MYB77"/>
</dbReference>
<dbReference type="eggNOG" id="KOG0048">
    <property type="taxonomic scope" value="Eukaryota"/>
</dbReference>
<dbReference type="HOGENOM" id="CLU_028567_14_0_1"/>
<dbReference type="InParanoid" id="Q9SN12"/>
<dbReference type="OMA" id="SEVSMMP"/>
<dbReference type="PhylomeDB" id="Q9SN12"/>
<dbReference type="PRO" id="PR:Q9SN12"/>
<dbReference type="Proteomes" id="UP000006548">
    <property type="component" value="Chromosome 3"/>
</dbReference>
<dbReference type="ExpressionAtlas" id="Q9SN12">
    <property type="expression patterns" value="baseline and differential"/>
</dbReference>
<dbReference type="GO" id="GO:0005634">
    <property type="term" value="C:nucleus"/>
    <property type="evidence" value="ECO:0000314"/>
    <property type="project" value="UniProtKB"/>
</dbReference>
<dbReference type="GO" id="GO:0003700">
    <property type="term" value="F:DNA-binding transcription factor activity"/>
    <property type="evidence" value="ECO:0000250"/>
    <property type="project" value="TAIR"/>
</dbReference>
<dbReference type="GO" id="GO:0000976">
    <property type="term" value="F:transcription cis-regulatory region binding"/>
    <property type="evidence" value="ECO:0000353"/>
    <property type="project" value="TAIR"/>
</dbReference>
<dbReference type="GO" id="GO:0048527">
    <property type="term" value="P:lateral root development"/>
    <property type="evidence" value="ECO:0000315"/>
    <property type="project" value="TAIR"/>
</dbReference>
<dbReference type="GO" id="GO:0010929">
    <property type="term" value="P:positive regulation of auxin mediated signaling pathway"/>
    <property type="evidence" value="ECO:0000314"/>
    <property type="project" value="UniProtKB"/>
</dbReference>
<dbReference type="GO" id="GO:0006355">
    <property type="term" value="P:regulation of DNA-templated transcription"/>
    <property type="evidence" value="ECO:0000314"/>
    <property type="project" value="UniProtKB"/>
</dbReference>
<dbReference type="CDD" id="cd00167">
    <property type="entry name" value="SANT"/>
    <property type="match status" value="2"/>
</dbReference>
<dbReference type="FunFam" id="1.10.10.60:FF:000060">
    <property type="entry name" value="MYB transcription factor"/>
    <property type="match status" value="1"/>
</dbReference>
<dbReference type="FunFam" id="1.10.10.60:FF:000744">
    <property type="entry name" value="MYB transcription factor"/>
    <property type="match status" value="1"/>
</dbReference>
<dbReference type="Gene3D" id="1.10.10.60">
    <property type="entry name" value="Homeodomain-like"/>
    <property type="match status" value="2"/>
</dbReference>
<dbReference type="InterPro" id="IPR009057">
    <property type="entry name" value="Homeodomain-like_sf"/>
</dbReference>
<dbReference type="InterPro" id="IPR017930">
    <property type="entry name" value="Myb_dom"/>
</dbReference>
<dbReference type="InterPro" id="IPR050560">
    <property type="entry name" value="MYB_TF"/>
</dbReference>
<dbReference type="InterPro" id="IPR001005">
    <property type="entry name" value="SANT/Myb"/>
</dbReference>
<dbReference type="PANTHER" id="PTHR45614">
    <property type="entry name" value="MYB PROTEIN-RELATED"/>
    <property type="match status" value="1"/>
</dbReference>
<dbReference type="PANTHER" id="PTHR45614:SF195">
    <property type="entry name" value="TRANSCRIPTION FACTOR MYB77"/>
    <property type="match status" value="1"/>
</dbReference>
<dbReference type="Pfam" id="PF00249">
    <property type="entry name" value="Myb_DNA-binding"/>
    <property type="match status" value="2"/>
</dbReference>
<dbReference type="SMART" id="SM00717">
    <property type="entry name" value="SANT"/>
    <property type="match status" value="2"/>
</dbReference>
<dbReference type="SUPFAM" id="SSF46689">
    <property type="entry name" value="Homeodomain-like"/>
    <property type="match status" value="1"/>
</dbReference>
<dbReference type="PROSITE" id="PS51294">
    <property type="entry name" value="HTH_MYB"/>
    <property type="match status" value="2"/>
</dbReference>
<keyword id="KW-0238">DNA-binding</keyword>
<keyword id="KW-0539">Nucleus</keyword>
<keyword id="KW-1185">Reference proteome</keyword>
<keyword id="KW-0677">Repeat</keyword>
<keyword id="KW-0804">Transcription</keyword>
<keyword id="KW-0805">Transcription regulation</keyword>
<accession>Q9SN12</accession>
<reference key="1">
    <citation type="submission" date="2004-01" db="EMBL/GenBank/DDBJ databases">
        <title>The MYB transcription factor family in Arabidopsis: a genome-wide cloning and expression pattern analysis.</title>
        <authorList>
            <person name="Qu L.-J."/>
            <person name="Gu H."/>
        </authorList>
    </citation>
    <scope>NUCLEOTIDE SEQUENCE [MRNA]</scope>
</reference>
<reference key="2">
    <citation type="journal article" date="2000" name="Nature">
        <title>Sequence and analysis of chromosome 3 of the plant Arabidopsis thaliana.</title>
        <authorList>
            <person name="Salanoubat M."/>
            <person name="Lemcke K."/>
            <person name="Rieger M."/>
            <person name="Ansorge W."/>
            <person name="Unseld M."/>
            <person name="Fartmann B."/>
            <person name="Valle G."/>
            <person name="Bloecker H."/>
            <person name="Perez-Alonso M."/>
            <person name="Obermaier B."/>
            <person name="Delseny M."/>
            <person name="Boutry M."/>
            <person name="Grivell L.A."/>
            <person name="Mache R."/>
            <person name="Puigdomenech P."/>
            <person name="De Simone V."/>
            <person name="Choisne N."/>
            <person name="Artiguenave F."/>
            <person name="Robert C."/>
            <person name="Brottier P."/>
            <person name="Wincker P."/>
            <person name="Cattolico L."/>
            <person name="Weissenbach J."/>
            <person name="Saurin W."/>
            <person name="Quetier F."/>
            <person name="Schaefer M."/>
            <person name="Mueller-Auer S."/>
            <person name="Gabel C."/>
            <person name="Fuchs M."/>
            <person name="Benes V."/>
            <person name="Wurmbach E."/>
            <person name="Drzonek H."/>
            <person name="Erfle H."/>
            <person name="Jordan N."/>
            <person name="Bangert S."/>
            <person name="Wiedelmann R."/>
            <person name="Kranz H."/>
            <person name="Voss H."/>
            <person name="Holland R."/>
            <person name="Brandt P."/>
            <person name="Nyakatura G."/>
            <person name="Vezzi A."/>
            <person name="D'Angelo M."/>
            <person name="Pallavicini A."/>
            <person name="Toppo S."/>
            <person name="Simionati B."/>
            <person name="Conrad A."/>
            <person name="Hornischer K."/>
            <person name="Kauer G."/>
            <person name="Loehnert T.-H."/>
            <person name="Nordsiek G."/>
            <person name="Reichelt J."/>
            <person name="Scharfe M."/>
            <person name="Schoen O."/>
            <person name="Bargues M."/>
            <person name="Terol J."/>
            <person name="Climent J."/>
            <person name="Navarro P."/>
            <person name="Collado C."/>
            <person name="Perez-Perez A."/>
            <person name="Ottenwaelder B."/>
            <person name="Duchemin D."/>
            <person name="Cooke R."/>
            <person name="Laudie M."/>
            <person name="Berger-Llauro C."/>
            <person name="Purnelle B."/>
            <person name="Masuy D."/>
            <person name="de Haan M."/>
            <person name="Maarse A.C."/>
            <person name="Alcaraz J.-P."/>
            <person name="Cottet A."/>
            <person name="Casacuberta E."/>
            <person name="Monfort A."/>
            <person name="Argiriou A."/>
            <person name="Flores M."/>
            <person name="Liguori R."/>
            <person name="Vitale D."/>
            <person name="Mannhaupt G."/>
            <person name="Haase D."/>
            <person name="Schoof H."/>
            <person name="Rudd S."/>
            <person name="Zaccaria P."/>
            <person name="Mewes H.-W."/>
            <person name="Mayer K.F.X."/>
            <person name="Kaul S."/>
            <person name="Town C.D."/>
            <person name="Koo H.L."/>
            <person name="Tallon L.J."/>
            <person name="Jenkins J."/>
            <person name="Rooney T."/>
            <person name="Rizzo M."/>
            <person name="Walts A."/>
            <person name="Utterback T."/>
            <person name="Fujii C.Y."/>
            <person name="Shea T.P."/>
            <person name="Creasy T.H."/>
            <person name="Haas B."/>
            <person name="Maiti R."/>
            <person name="Wu D."/>
            <person name="Peterson J."/>
            <person name="Van Aken S."/>
            <person name="Pai G."/>
            <person name="Militscher J."/>
            <person name="Sellers P."/>
            <person name="Gill J.E."/>
            <person name="Feldblyum T.V."/>
            <person name="Preuss D."/>
            <person name="Lin X."/>
            <person name="Nierman W.C."/>
            <person name="Salzberg S.L."/>
            <person name="White O."/>
            <person name="Venter J.C."/>
            <person name="Fraser C.M."/>
            <person name="Kaneko T."/>
            <person name="Nakamura Y."/>
            <person name="Sato S."/>
            <person name="Kato T."/>
            <person name="Asamizu E."/>
            <person name="Sasamoto S."/>
            <person name="Kimura T."/>
            <person name="Idesawa K."/>
            <person name="Kawashima K."/>
            <person name="Kishida Y."/>
            <person name="Kiyokawa C."/>
            <person name="Kohara M."/>
            <person name="Matsumoto M."/>
            <person name="Matsuno A."/>
            <person name="Muraki A."/>
            <person name="Nakayama S."/>
            <person name="Nakazaki N."/>
            <person name="Shinpo S."/>
            <person name="Takeuchi C."/>
            <person name="Wada T."/>
            <person name="Watanabe A."/>
            <person name="Yamada M."/>
            <person name="Yasuda M."/>
            <person name="Tabata S."/>
        </authorList>
    </citation>
    <scope>NUCLEOTIDE SEQUENCE [LARGE SCALE GENOMIC DNA]</scope>
    <source>
        <strain>cv. Columbia</strain>
    </source>
</reference>
<reference key="3">
    <citation type="journal article" date="2017" name="Plant J.">
        <title>Araport11: a complete reannotation of the Arabidopsis thaliana reference genome.</title>
        <authorList>
            <person name="Cheng C.Y."/>
            <person name="Krishnakumar V."/>
            <person name="Chan A.P."/>
            <person name="Thibaud-Nissen F."/>
            <person name="Schobel S."/>
            <person name="Town C.D."/>
        </authorList>
    </citation>
    <scope>GENOME REANNOTATION</scope>
    <source>
        <strain>cv. Columbia</strain>
    </source>
</reference>
<reference key="4">
    <citation type="journal article" date="2003" name="Science">
        <title>Empirical analysis of transcriptional activity in the Arabidopsis genome.</title>
        <authorList>
            <person name="Yamada K."/>
            <person name="Lim J."/>
            <person name="Dale J.M."/>
            <person name="Chen H."/>
            <person name="Shinn P."/>
            <person name="Palm C.J."/>
            <person name="Southwick A.M."/>
            <person name="Wu H.C."/>
            <person name="Kim C.J."/>
            <person name="Nguyen M."/>
            <person name="Pham P.K."/>
            <person name="Cheuk R.F."/>
            <person name="Karlin-Newmann G."/>
            <person name="Liu S.X."/>
            <person name="Lam B."/>
            <person name="Sakano H."/>
            <person name="Wu T."/>
            <person name="Yu G."/>
            <person name="Miranda M."/>
            <person name="Quach H.L."/>
            <person name="Tripp M."/>
            <person name="Chang C.H."/>
            <person name="Lee J.M."/>
            <person name="Toriumi M.J."/>
            <person name="Chan M.M."/>
            <person name="Tang C.C."/>
            <person name="Onodera C.S."/>
            <person name="Deng J.M."/>
            <person name="Akiyama K."/>
            <person name="Ansari Y."/>
            <person name="Arakawa T."/>
            <person name="Banh J."/>
            <person name="Banno F."/>
            <person name="Bowser L."/>
            <person name="Brooks S.Y."/>
            <person name="Carninci P."/>
            <person name="Chao Q."/>
            <person name="Choy N."/>
            <person name="Enju A."/>
            <person name="Goldsmith A.D."/>
            <person name="Gurjal M."/>
            <person name="Hansen N.F."/>
            <person name="Hayashizaki Y."/>
            <person name="Johnson-Hopson C."/>
            <person name="Hsuan V.W."/>
            <person name="Iida K."/>
            <person name="Karnes M."/>
            <person name="Khan S."/>
            <person name="Koesema E."/>
            <person name="Ishida J."/>
            <person name="Jiang P.X."/>
            <person name="Jones T."/>
            <person name="Kawai J."/>
            <person name="Kamiya A."/>
            <person name="Meyers C."/>
            <person name="Nakajima M."/>
            <person name="Narusaka M."/>
            <person name="Seki M."/>
            <person name="Sakurai T."/>
            <person name="Satou M."/>
            <person name="Tamse R."/>
            <person name="Vaysberg M."/>
            <person name="Wallender E.K."/>
            <person name="Wong C."/>
            <person name="Yamamura Y."/>
            <person name="Yuan S."/>
            <person name="Shinozaki K."/>
            <person name="Davis R.W."/>
            <person name="Theologis A."/>
            <person name="Ecker J.R."/>
        </authorList>
    </citation>
    <scope>NUCLEOTIDE SEQUENCE [LARGE SCALE MRNA]</scope>
    <source>
        <strain>cv. Columbia</strain>
    </source>
</reference>
<reference key="5">
    <citation type="journal article" date="1998" name="Plant Mol. Biol.">
        <title>Two novel MYB homologues with changed expression in late embryogenesis-defective Arabidopsis mutants.</title>
        <authorList>
            <person name="Kirik V."/>
            <person name="Koelle K."/>
            <person name="Misera S."/>
            <person name="Baeumlein H."/>
        </authorList>
    </citation>
    <scope>TISSUE SPECIFICITY</scope>
    <scope>DEVELOPMENTAL STAGE</scope>
    <source>
        <strain>cv. Landsberg erecta</strain>
    </source>
</reference>
<reference key="6">
    <citation type="journal article" date="2001" name="Curr. Opin. Plant Biol.">
        <title>The R2R3-MYB gene family in Arabidopsis thaliana.</title>
        <authorList>
            <person name="Stracke R."/>
            <person name="Werber M."/>
            <person name="Weisshaar B."/>
        </authorList>
    </citation>
    <scope>GENE FAMILY</scope>
    <scope>NOMENCLATURE</scope>
</reference>
<reference key="7">
    <citation type="journal article" date="2004" name="Proc. Natl. Acad. Sci. U.S.A.">
        <title>Hydrogen peroxide mediates plant root cell response to nutrient deprivation.</title>
        <authorList>
            <person name="Shin R."/>
            <person name="Schachtman D.P."/>
        </authorList>
    </citation>
    <scope>INDUCTION</scope>
</reference>
<reference key="8">
    <citation type="journal article" date="2007" name="Plant Cell">
        <title>The Arabidopsis transcription factor MYB77 modulates auxin signal transduction.</title>
        <authorList>
            <person name="Shin R."/>
            <person name="Burch A.Y."/>
            <person name="Huppert K.A."/>
            <person name="Tiwari S.B."/>
            <person name="Murphy A.S."/>
            <person name="Guilfoyle T.J."/>
            <person name="Schachtman D.P."/>
        </authorList>
    </citation>
    <scope>FUNCTION</scope>
    <scope>INTERACTION WITH ARF1; ARF7 AND IAA19</scope>
    <scope>SUBCELLULAR LOCATION</scope>
    <scope>TISSUE SPECIFICITY</scope>
    <scope>INDUCTION BY AUXIN</scope>
    <scope>DISRUPTION PHENOTYPE</scope>
</reference>
<reference key="9">
    <citation type="journal article" date="2014" name="Sci. Signal.">
        <title>The ABA receptor PYL8 promotes lateral root growth by enhancing MYB77-dependent transcription of auxin-responsive genes.</title>
        <authorList>
            <person name="Zhao Y."/>
            <person name="Xing L."/>
            <person name="Wang X."/>
            <person name="Hou Y.J."/>
            <person name="Gao J."/>
            <person name="Wang P."/>
            <person name="Duan C.G."/>
            <person name="Zhu X."/>
            <person name="Zhu J.K."/>
        </authorList>
    </citation>
    <scope>FUNCTION</scope>
    <scope>INTERACTION WITH PYL8</scope>
</reference>
<evidence type="ECO:0000255" key="1">
    <source>
        <dbReference type="PROSITE-ProRule" id="PRU00625"/>
    </source>
</evidence>
<evidence type="ECO:0000256" key="2">
    <source>
        <dbReference type="SAM" id="MobiDB-lite"/>
    </source>
</evidence>
<evidence type="ECO:0000269" key="3">
    <source>
    </source>
</evidence>
<evidence type="ECO:0000269" key="4">
    <source>
    </source>
</evidence>
<evidence type="ECO:0000269" key="5">
    <source>
    </source>
</evidence>
<evidence type="ECO:0000269" key="6">
    <source>
    </source>
</evidence>
<evidence type="ECO:0000303" key="7">
    <source>
    </source>
</evidence>
<evidence type="ECO:0000303" key="8">
    <source>
    </source>
</evidence>
<evidence type="ECO:0000312" key="9">
    <source>
        <dbReference type="Araport" id="AT3G50060"/>
    </source>
</evidence>
<evidence type="ECO:0000312" key="10">
    <source>
        <dbReference type="EMBL" id="CAB62114.1"/>
    </source>
</evidence>
<feature type="chain" id="PRO_0000442698" description="Transcription factor MYB77">
    <location>
        <begin position="1"/>
        <end position="301"/>
    </location>
</feature>
<feature type="domain" description="HTH myb-type 1" evidence="1">
    <location>
        <begin position="1"/>
        <end position="56"/>
    </location>
</feature>
<feature type="domain" description="HTH myb-type 2" evidence="1">
    <location>
        <begin position="58"/>
        <end position="107"/>
    </location>
</feature>
<feature type="DNA-binding region" description="H-T-H motif" evidence="1">
    <location>
        <begin position="29"/>
        <end position="52"/>
    </location>
</feature>
<feature type="DNA-binding region" description="H-T-H motif" evidence="1">
    <location>
        <begin position="80"/>
        <end position="103"/>
    </location>
</feature>
<feature type="region of interest" description="Disordered" evidence="2">
    <location>
        <begin position="145"/>
        <end position="167"/>
    </location>
</feature>
<feature type="region of interest" description="Disordered" evidence="2">
    <location>
        <begin position="190"/>
        <end position="225"/>
    </location>
</feature>
<feature type="compositionally biased region" description="Low complexity" evidence="2">
    <location>
        <begin position="155"/>
        <end position="167"/>
    </location>
</feature>
<feature type="compositionally biased region" description="Low complexity" evidence="2">
    <location>
        <begin position="195"/>
        <end position="224"/>
    </location>
</feature>
<comment type="function">
    <text evidence="4 5">Transcription factor involved in auxin response. Functions in auxin signal transduction and modulates lateral root growth. Interacts with ARF response factors to promote auxin-responsive gene expression (PubMed:17675404). In response to auxin, binds sequence-specific motifs in the promoter of the auxin-responsive gene IAA19, and activates IAA19 transcription. The IAA19 transcription activation by MYB77 is enhanced by direct interaction between MYB77 and PYL8 (PubMed:24894996).</text>
</comment>
<comment type="subunit">
    <text evidence="4 5">Interacts with ARF1, ARF7 and IAA19 (PubMed:17675404). Interacts with PYL8 (PubMed:24894996).</text>
</comment>
<comment type="interaction">
    <interactant intactId="EBI-2324225">
        <id>Q9SN12</id>
    </interactant>
    <interactant intactId="EBI-2324259">
        <id>Q8L7G0</id>
        <label>ARF1</label>
    </interactant>
    <organismsDiffer>false</organismsDiffer>
    <experiments>2</experiments>
</comment>
<comment type="interaction">
    <interactant intactId="EBI-2324225">
        <id>Q9SN12</id>
    </interactant>
    <interactant intactId="EBI-632284">
        <id>P93022</id>
        <label>ARF7</label>
    </interactant>
    <organismsDiffer>false</organismsDiffer>
    <experiments>3</experiments>
</comment>
<comment type="interaction">
    <interactant intactId="EBI-2324225">
        <id>Q9SN12</id>
    </interactant>
    <interactant intactId="EBI-632257">
        <id>O24409</id>
        <label>IAA19</label>
    </interactant>
    <organismsDiffer>false</organismsDiffer>
    <experiments>3</experiments>
</comment>
<comment type="interaction">
    <interactant intactId="EBI-2324225">
        <id>Q9SN12</id>
    </interactant>
    <interactant intactId="EBI-2363213">
        <id>Q8H1R0</id>
        <label>PYL10</label>
    </interactant>
    <organismsDiffer>false</organismsDiffer>
    <experiments>3</experiments>
</comment>
<comment type="interaction">
    <interactant intactId="EBI-2324225">
        <id>Q9SN12</id>
    </interactant>
    <interactant intactId="EBI-2363233">
        <id>Q9FJ50</id>
        <label>PYL11</label>
    </interactant>
    <organismsDiffer>false</organismsDiffer>
    <experiments>3</experiments>
</comment>
<comment type="interaction">
    <interactant intactId="EBI-2324225">
        <id>Q9SN12</id>
    </interactant>
    <interactant intactId="EBI-2363181">
        <id>Q9FLB1</id>
        <label>PYL5</label>
    </interactant>
    <organismsDiffer>false</organismsDiffer>
    <experiments>3</experiments>
</comment>
<comment type="interaction">
    <interactant intactId="EBI-2324225">
        <id>Q9SN12</id>
    </interactant>
    <interactant intactId="EBI-2363192">
        <id>Q8S8E3</id>
        <label>PYL6</label>
    </interactant>
    <organismsDiffer>false</organismsDiffer>
    <experiments>3</experiments>
</comment>
<comment type="interaction">
    <interactant intactId="EBI-2324225">
        <id>Q9SN12</id>
    </interactant>
    <interactant intactId="EBI-2429535">
        <id>Q9FGM1</id>
        <label>PYL8</label>
    </interactant>
    <organismsDiffer>false</organismsDiffer>
    <experiments>4</experiments>
</comment>
<comment type="interaction">
    <interactant intactId="EBI-2324225">
        <id>Q9SN12</id>
    </interactant>
    <interactant intactId="EBI-2349513">
        <id>Q84MC7</id>
        <label>PYL9</label>
    </interactant>
    <organismsDiffer>false</organismsDiffer>
    <experiments>8</experiments>
</comment>
<comment type="subcellular location">
    <subcellularLocation>
        <location evidence="1 4">Nucleus</location>
    </subcellularLocation>
</comment>
<comment type="tissue specificity">
    <text evidence="4 6">Expressed in roots, stems and flowers. Expressed in dry seeds (PubMed:9678577). Expressed in root vasculature, root tips and lateral root (PubMed:17675404).</text>
</comment>
<comment type="developmental stage">
    <text evidence="6">Expressed in leaves from the third leaf to rosette leaves from six-week old plants. Expression follows a development-dependent gradient in successive leaves.</text>
</comment>
<comment type="induction">
    <text evidence="3 4">Induced by auxin (PubMed:17675404). Down-regulated by potassium deprivation (PubMed:15173595).</text>
</comment>
<comment type="disruption phenotype">
    <text evidence="4">No visible phenotype under normal growth conditions.</text>
</comment>
<comment type="miscellaneous">
    <text evidence="4">Plants overexpressing MYB77 exhibit stunted roots and shoots.</text>
</comment>